<protein>
    <recommendedName>
        <fullName evidence="4">QRFP-like peptide</fullName>
    </recommendedName>
</protein>
<evidence type="ECO:0000255" key="1"/>
<evidence type="ECO:0000256" key="2">
    <source>
        <dbReference type="SAM" id="MobiDB-lite"/>
    </source>
</evidence>
<evidence type="ECO:0000269" key="3">
    <source>
    </source>
</evidence>
<evidence type="ECO:0000303" key="4">
    <source>
    </source>
</evidence>
<evidence type="ECO:0000305" key="5"/>
<evidence type="ECO:0000305" key="6">
    <source>
    </source>
</evidence>
<evidence type="ECO:0000312" key="7">
    <source>
        <dbReference type="EMBL" id="EEN51890.1"/>
    </source>
</evidence>
<evidence type="ECO:0000312" key="8">
    <source>
        <dbReference type="Proteomes" id="UP000001554"/>
    </source>
</evidence>
<proteinExistence type="evidence at protein level"/>
<gene>
    <name evidence="4" type="primary">QRFP</name>
    <name evidence="7" type="ORF">BRAFLDRAFT_107075</name>
</gene>
<accession>C3Z6E6</accession>
<feature type="signal peptide" evidence="1">
    <location>
        <begin position="1"/>
        <end position="25"/>
    </location>
</feature>
<feature type="propeptide" id="PRO_0000442015" evidence="5">
    <location>
        <begin position="26"/>
        <end position="94"/>
    </location>
</feature>
<feature type="peptide" id="PRO_0000442016" description="QRFP-like peptide" evidence="6">
    <location>
        <begin position="95"/>
        <end position="119"/>
    </location>
</feature>
<feature type="propeptide" id="PRO_0000442017" evidence="5">
    <location>
        <begin position="123"/>
        <end position="131"/>
    </location>
</feature>
<feature type="region of interest" description="Disordered" evidence="2">
    <location>
        <begin position="48"/>
        <end position="131"/>
    </location>
</feature>
<feature type="compositionally biased region" description="Polar residues" evidence="2">
    <location>
        <begin position="97"/>
        <end position="106"/>
    </location>
</feature>
<feature type="compositionally biased region" description="Basic and acidic residues" evidence="2">
    <location>
        <begin position="120"/>
        <end position="131"/>
    </location>
</feature>
<feature type="modified residue" description="Phenylalanine amide" evidence="6">
    <location>
        <position position="119"/>
    </location>
</feature>
<name>QRFP_BRAFL</name>
<reference evidence="8" key="1">
    <citation type="journal article" date="2008" name="Nature">
        <title>The amphioxus genome and the evolution of the chordate karyotype.</title>
        <authorList>
            <person name="Putnam N.H."/>
            <person name="Butts T."/>
            <person name="Ferrier D.E.K."/>
            <person name="Furlong R.F."/>
            <person name="Hellsten U."/>
            <person name="Kawashima T."/>
            <person name="Robinson-Rechavi M."/>
            <person name="Shoguchi E."/>
            <person name="Terry A."/>
            <person name="Yu J.-K."/>
            <person name="Benito-Gutierrez E.L."/>
            <person name="Dubchak I."/>
            <person name="Garcia-Fernandez J."/>
            <person name="Gibson-Brown J.J."/>
            <person name="Grigoriev I.V."/>
            <person name="Horton A.C."/>
            <person name="de Jong P.J."/>
            <person name="Jurka J."/>
            <person name="Kapitonov V.V."/>
            <person name="Kohara Y."/>
            <person name="Kuroki Y."/>
            <person name="Lindquist E."/>
            <person name="Lucas S."/>
            <person name="Osoegawa K."/>
            <person name="Pennacchio L.A."/>
            <person name="Salamov A.A."/>
            <person name="Satou Y."/>
            <person name="Sauka-Spengler T."/>
            <person name="Schmutz J."/>
            <person name="Shin-I T."/>
            <person name="Toyoda A."/>
            <person name="Bronner-Fraser M."/>
            <person name="Fujiyama A."/>
            <person name="Holland L.Z."/>
            <person name="Holland P.W.H."/>
            <person name="Satoh N."/>
            <person name="Rokhsar D.S."/>
        </authorList>
    </citation>
    <scope>NUCLEOTIDE SEQUENCE [LARGE SCALE GENOMIC DNA]</scope>
    <source>
        <strain evidence="8">S238N-H82</strain>
    </source>
</reference>
<reference evidence="5" key="2">
    <citation type="journal article" date="2015" name="Gen. Comp. Endocrinol.">
        <title>Characterization of peptide QRFP (26RFa) and its receptor from amphioxus, Branchiostoma floridae.</title>
        <authorList>
            <person name="Xu B."/>
            <person name="Bergqvist C.A."/>
            <person name="Sundstroem G."/>
            <person name="Lundell I."/>
            <person name="Vaudry H."/>
            <person name="Leprince J."/>
            <person name="Larhammar D."/>
        </authorList>
    </citation>
    <scope>SYNTHESIS OF 95-119</scope>
    <scope>FUNCTION</scope>
    <scope>SUBCELLULAR LOCATION</scope>
    <scope>AMIDATION AT PHE-119</scope>
</reference>
<sequence>MGVRVMRSRICVIGLLVLMLTQSEAYSFREKSWRTSPYYRQYGGYFRRRDGGDQAPSFTSTGNGEDVSNGLDDDAGIYLSDQAGDDGISPADKRSAMLQQLAQQLKNRPREKGGFTFRFGKRESRRSFGSD</sequence>
<keyword id="KW-0027">Amidation</keyword>
<keyword id="KW-0165">Cleavage on pair of basic residues</keyword>
<keyword id="KW-1185">Reference proteome</keyword>
<keyword id="KW-0964">Secreted</keyword>
<keyword id="KW-0732">Signal</keyword>
<organism evidence="8">
    <name type="scientific">Branchiostoma floridae</name>
    <name type="common">Florida lancelet</name>
    <name type="synonym">Amphioxus</name>
    <dbReference type="NCBI Taxonomy" id="7739"/>
    <lineage>
        <taxon>Eukaryota</taxon>
        <taxon>Metazoa</taxon>
        <taxon>Chordata</taxon>
        <taxon>Cephalochordata</taxon>
        <taxon>Leptocardii</taxon>
        <taxon>Amphioxiformes</taxon>
        <taxon>Branchiostomatidae</taxon>
        <taxon>Branchiostoma</taxon>
    </lineage>
</organism>
<comment type="function">
    <text evidence="3">Ligand for the G-protein coupled receptor QRFPR.</text>
</comment>
<comment type="subcellular location">
    <subcellularLocation>
        <location evidence="6">Secreted</location>
    </subcellularLocation>
</comment>
<comment type="similarity">
    <text evidence="5">Belongs to the RFamide neuropeptide family.</text>
</comment>
<dbReference type="EMBL" id="GG666587">
    <property type="protein sequence ID" value="EEN51890.1"/>
    <property type="molecule type" value="Genomic_DNA"/>
</dbReference>
<dbReference type="RefSeq" id="XP_002595878.1">
    <property type="nucleotide sequence ID" value="XM_002595832.1"/>
</dbReference>
<dbReference type="SMR" id="C3Z6E6"/>
<dbReference type="InParanoid" id="C3Z6E6"/>
<dbReference type="Proteomes" id="UP000001554">
    <property type="component" value="Unplaced"/>
</dbReference>
<dbReference type="GO" id="GO:0005576">
    <property type="term" value="C:extracellular region"/>
    <property type="evidence" value="ECO:0000305"/>
    <property type="project" value="UniProtKB"/>
</dbReference>
<dbReference type="GO" id="GO:0001664">
    <property type="term" value="F:G protein-coupled receptor binding"/>
    <property type="evidence" value="ECO:0000314"/>
    <property type="project" value="UniProtKB"/>
</dbReference>
<dbReference type="GO" id="GO:0031854">
    <property type="term" value="F:orexigenic neuropeptide QRFP receptor binding"/>
    <property type="evidence" value="ECO:0007669"/>
    <property type="project" value="InterPro"/>
</dbReference>
<dbReference type="InterPro" id="IPR024565">
    <property type="entry name" value="P518"/>
</dbReference>
<dbReference type="Pfam" id="PF11109">
    <property type="entry name" value="RFamide_26RFa"/>
    <property type="match status" value="1"/>
</dbReference>